<feature type="chain" id="PRO_0000328303" description="V-type proton ATPase subunit G">
    <location>
        <begin position="1"/>
        <end position="107"/>
    </location>
</feature>
<keyword id="KW-0375">Hydrogen ion transport</keyword>
<keyword id="KW-0406">Ion transport</keyword>
<keyword id="KW-1185">Reference proteome</keyword>
<keyword id="KW-0813">Transport</keyword>
<protein>
    <recommendedName>
        <fullName>V-type proton ATPase subunit G</fullName>
        <shortName>V-ATPase subunit G</shortName>
    </recommendedName>
    <alternativeName>
        <fullName>Vacuolar proton pump subunit G</fullName>
    </alternativeName>
</protein>
<organism>
    <name type="scientific">Dictyostelium discoideum</name>
    <name type="common">Social amoeba</name>
    <dbReference type="NCBI Taxonomy" id="44689"/>
    <lineage>
        <taxon>Eukaryota</taxon>
        <taxon>Amoebozoa</taxon>
        <taxon>Evosea</taxon>
        <taxon>Eumycetozoa</taxon>
        <taxon>Dictyostelia</taxon>
        <taxon>Dictyosteliales</taxon>
        <taxon>Dictyosteliaceae</taxon>
        <taxon>Dictyostelium</taxon>
    </lineage>
</organism>
<reference key="1">
    <citation type="journal article" date="2005" name="Nature">
        <title>The genome of the social amoeba Dictyostelium discoideum.</title>
        <authorList>
            <person name="Eichinger L."/>
            <person name="Pachebat J.A."/>
            <person name="Gloeckner G."/>
            <person name="Rajandream M.A."/>
            <person name="Sucgang R."/>
            <person name="Berriman M."/>
            <person name="Song J."/>
            <person name="Olsen R."/>
            <person name="Szafranski K."/>
            <person name="Xu Q."/>
            <person name="Tunggal B."/>
            <person name="Kummerfeld S."/>
            <person name="Madera M."/>
            <person name="Konfortov B.A."/>
            <person name="Rivero F."/>
            <person name="Bankier A.T."/>
            <person name="Lehmann R."/>
            <person name="Hamlin N."/>
            <person name="Davies R."/>
            <person name="Gaudet P."/>
            <person name="Fey P."/>
            <person name="Pilcher K."/>
            <person name="Chen G."/>
            <person name="Saunders D."/>
            <person name="Sodergren E.J."/>
            <person name="Davis P."/>
            <person name="Kerhornou A."/>
            <person name="Nie X."/>
            <person name="Hall N."/>
            <person name="Anjard C."/>
            <person name="Hemphill L."/>
            <person name="Bason N."/>
            <person name="Farbrother P."/>
            <person name="Desany B."/>
            <person name="Just E."/>
            <person name="Morio T."/>
            <person name="Rost R."/>
            <person name="Churcher C.M."/>
            <person name="Cooper J."/>
            <person name="Haydock S."/>
            <person name="van Driessche N."/>
            <person name="Cronin A."/>
            <person name="Goodhead I."/>
            <person name="Muzny D.M."/>
            <person name="Mourier T."/>
            <person name="Pain A."/>
            <person name="Lu M."/>
            <person name="Harper D."/>
            <person name="Lindsay R."/>
            <person name="Hauser H."/>
            <person name="James K.D."/>
            <person name="Quiles M."/>
            <person name="Madan Babu M."/>
            <person name="Saito T."/>
            <person name="Buchrieser C."/>
            <person name="Wardroper A."/>
            <person name="Felder M."/>
            <person name="Thangavelu M."/>
            <person name="Johnson D."/>
            <person name="Knights A."/>
            <person name="Loulseged H."/>
            <person name="Mungall K.L."/>
            <person name="Oliver K."/>
            <person name="Price C."/>
            <person name="Quail M.A."/>
            <person name="Urushihara H."/>
            <person name="Hernandez J."/>
            <person name="Rabbinowitsch E."/>
            <person name="Steffen D."/>
            <person name="Sanders M."/>
            <person name="Ma J."/>
            <person name="Kohara Y."/>
            <person name="Sharp S."/>
            <person name="Simmonds M.N."/>
            <person name="Spiegler S."/>
            <person name="Tivey A."/>
            <person name="Sugano S."/>
            <person name="White B."/>
            <person name="Walker D."/>
            <person name="Woodward J.R."/>
            <person name="Winckler T."/>
            <person name="Tanaka Y."/>
            <person name="Shaulsky G."/>
            <person name="Schleicher M."/>
            <person name="Weinstock G.M."/>
            <person name="Rosenthal A."/>
            <person name="Cox E.C."/>
            <person name="Chisholm R.L."/>
            <person name="Gibbs R.A."/>
            <person name="Loomis W.F."/>
            <person name="Platzer M."/>
            <person name="Kay R.R."/>
            <person name="Williams J.G."/>
            <person name="Dear P.H."/>
            <person name="Noegel A.A."/>
            <person name="Barrell B.G."/>
            <person name="Kuspa A."/>
        </authorList>
    </citation>
    <scope>NUCLEOTIDE SEQUENCE [LARGE SCALE GENOMIC DNA]</scope>
    <source>
        <strain>AX4</strain>
    </source>
</reference>
<reference key="2">
    <citation type="journal article" date="2006" name="Mol. Cell. Proteomics">
        <title>Proteomics fingerprinting of phagosome maturation and evidence for the role of a Galpha during uptake.</title>
        <authorList>
            <person name="Gotthardt D."/>
            <person name="Blancheteau V."/>
            <person name="Bosserhoff A."/>
            <person name="Ruppert T."/>
            <person name="Delorenzi M."/>
            <person name="Soldati T."/>
        </authorList>
    </citation>
    <scope>IDENTIFICATION BY MASS SPECTROMETRY [LARGE SCALE ANALYSIS]</scope>
    <source>
        <strain>AX2</strain>
    </source>
</reference>
<evidence type="ECO:0000250" key="1"/>
<evidence type="ECO:0000305" key="2"/>
<name>VATG_DICDI</name>
<dbReference type="EMBL" id="AAFI02000023">
    <property type="protein sequence ID" value="EAL68158.2"/>
    <property type="molecule type" value="Genomic_DNA"/>
</dbReference>
<dbReference type="RefSeq" id="XP_642039.2">
    <property type="nucleotide sequence ID" value="XM_636947.2"/>
</dbReference>
<dbReference type="SMR" id="Q54Z13"/>
<dbReference type="FunCoup" id="Q54Z13">
    <property type="interactions" value="52"/>
</dbReference>
<dbReference type="STRING" id="44689.Q54Z13"/>
<dbReference type="PaxDb" id="44689-DDB0238144"/>
<dbReference type="EnsemblProtists" id="EAL68158">
    <property type="protein sequence ID" value="EAL68158"/>
    <property type="gene ID" value="DDB_G0277971"/>
</dbReference>
<dbReference type="GeneID" id="8621251"/>
<dbReference type="KEGG" id="ddi:DDB_G0277971"/>
<dbReference type="dictyBase" id="DDB_G0277971">
    <property type="gene designation" value="vatG"/>
</dbReference>
<dbReference type="VEuPathDB" id="AmoebaDB:DDB_G0277971"/>
<dbReference type="eggNOG" id="KOG1772">
    <property type="taxonomic scope" value="Eukaryota"/>
</dbReference>
<dbReference type="HOGENOM" id="CLU_125101_2_1_1"/>
<dbReference type="InParanoid" id="Q54Z13"/>
<dbReference type="OMA" id="ARKYRQD"/>
<dbReference type="Reactome" id="R-DDI-1222556">
    <property type="pathway name" value="ROS and RNS production in phagocytes"/>
</dbReference>
<dbReference type="Reactome" id="R-DDI-77387">
    <property type="pathway name" value="Insulin receptor recycling"/>
</dbReference>
<dbReference type="Reactome" id="R-DDI-917977">
    <property type="pathway name" value="Transferrin endocytosis and recycling"/>
</dbReference>
<dbReference type="Reactome" id="R-DDI-9639288">
    <property type="pathway name" value="Amino acids regulate mTORC1"/>
</dbReference>
<dbReference type="PRO" id="PR:Q54Z13"/>
<dbReference type="Proteomes" id="UP000002195">
    <property type="component" value="Chromosome 3"/>
</dbReference>
<dbReference type="GO" id="GO:0031164">
    <property type="term" value="C:contractile vacuolar membrane"/>
    <property type="evidence" value="ECO:0000304"/>
    <property type="project" value="dictyBase"/>
</dbReference>
<dbReference type="GO" id="GO:0045335">
    <property type="term" value="C:phagocytic vesicle"/>
    <property type="evidence" value="ECO:0007005"/>
    <property type="project" value="dictyBase"/>
</dbReference>
<dbReference type="GO" id="GO:0000221">
    <property type="term" value="C:vacuolar proton-transporting V-type ATPase, V1 domain"/>
    <property type="evidence" value="ECO:0000250"/>
    <property type="project" value="dictyBase"/>
</dbReference>
<dbReference type="GO" id="GO:0016887">
    <property type="term" value="F:ATP hydrolysis activity"/>
    <property type="evidence" value="ECO:0000318"/>
    <property type="project" value="GO_Central"/>
</dbReference>
<dbReference type="GO" id="GO:0046961">
    <property type="term" value="F:proton-transporting ATPase activity, rotational mechanism"/>
    <property type="evidence" value="ECO:0000318"/>
    <property type="project" value="GO_Central"/>
</dbReference>
<dbReference type="FunFam" id="1.20.5.2950:FF:000001">
    <property type="entry name" value="V-type proton ATPase subunit G"/>
    <property type="match status" value="1"/>
</dbReference>
<dbReference type="Gene3D" id="1.20.5.2950">
    <property type="match status" value="1"/>
</dbReference>
<dbReference type="InterPro" id="IPR005124">
    <property type="entry name" value="V-ATPase_G"/>
</dbReference>
<dbReference type="NCBIfam" id="TIGR01147">
    <property type="entry name" value="V_ATP_synt_G"/>
    <property type="match status" value="1"/>
</dbReference>
<dbReference type="PANTHER" id="PTHR12713:SF11">
    <property type="entry name" value="V-TYPE PROTON ATPASE SUBUNIT G"/>
    <property type="match status" value="1"/>
</dbReference>
<dbReference type="PANTHER" id="PTHR12713">
    <property type="entry name" value="VACUOLAR ATP SYNTHASE SUBUNIT G"/>
    <property type="match status" value="1"/>
</dbReference>
<dbReference type="Pfam" id="PF03179">
    <property type="entry name" value="V-ATPase_G"/>
    <property type="match status" value="1"/>
</dbReference>
<proteinExistence type="evidence at protein level"/>
<accession>Q54Z13</accession>
<gene>
    <name type="primary">atp6v1g</name>
    <name type="synonym">vatg</name>
    <name type="ORF">DDB_G0277971</name>
</gene>
<sequence length="107" mass="12199">MSSEDGIKKLLDAERTAQKIVADARQDRVQKLKKAVEEAEKEIKEFREKKDKEYKEYESKYLGASSETASQLATNANKEIDTIRNETAANKQKVVDLLIKYAITCDN</sequence>
<comment type="function">
    <text>Catalytic subunit of the peripheral V1 complex of vacuolar ATPase (V-ATPase). V-ATPase is responsible for acidifying a variety of intracellular compartments in eukaryotic cells.</text>
</comment>
<comment type="subunit">
    <text evidence="1">V-ATPase is a heteromultimeric enzyme composed of a peripheral catalytic V1 complex (components A to H) attached to an integral membrane V0 proton pore complex (components: a, c, c', c'' and d).</text>
</comment>
<comment type="similarity">
    <text evidence="2">Belongs to the V-ATPase G subunit family.</text>
</comment>